<protein>
    <recommendedName>
        <fullName evidence="1">Proteasome subunit beta 2</fullName>
        <ecNumber evidence="1">3.4.25.1</ecNumber>
    </recommendedName>
    <alternativeName>
        <fullName evidence="1">20S proteasome beta subunit 2</fullName>
    </alternativeName>
    <alternativeName>
        <fullName evidence="1">Proteasome core protein PsmB 2</fullName>
    </alternativeName>
</protein>
<reference key="1">
    <citation type="journal article" date="2008" name="J. Bacteriol.">
        <title>Genome sequence of Thermofilum pendens reveals an exceptional loss of biosynthetic pathways without genome reduction.</title>
        <authorList>
            <person name="Anderson I."/>
            <person name="Rodriguez J."/>
            <person name="Susanti D."/>
            <person name="Porat I."/>
            <person name="Reich C."/>
            <person name="Ulrich L.E."/>
            <person name="Elkins J.G."/>
            <person name="Mavromatis K."/>
            <person name="Lykidis A."/>
            <person name="Kim E."/>
            <person name="Thompson L.S."/>
            <person name="Nolan M."/>
            <person name="Land M."/>
            <person name="Copeland A."/>
            <person name="Lapidus A."/>
            <person name="Lucas S."/>
            <person name="Detter C."/>
            <person name="Zhulin I.B."/>
            <person name="Olsen G.J."/>
            <person name="Whitman W."/>
            <person name="Mukhopadhyay B."/>
            <person name="Bristow J."/>
            <person name="Kyrpides N."/>
        </authorList>
    </citation>
    <scope>NUCLEOTIDE SEQUENCE [LARGE SCALE GENOMIC DNA]</scope>
    <source>
        <strain>DSM 2475 / Hrk 5</strain>
    </source>
</reference>
<feature type="propeptide" id="PRO_0000397478" description="Removed in mature form; by autocatalysis" evidence="1">
    <location>
        <begin position="1"/>
        <end position="6"/>
    </location>
</feature>
<feature type="chain" id="PRO_0000397479" description="Proteasome subunit beta 2">
    <location>
        <begin position="7"/>
        <end position="204"/>
    </location>
</feature>
<feature type="active site" description="Nucleophile" evidence="1">
    <location>
        <position position="7"/>
    </location>
</feature>
<name>PSB2_THEPD</name>
<gene>
    <name evidence="1" type="primary">psmB2</name>
    <name type="ordered locus">Tpen_0392</name>
</gene>
<evidence type="ECO:0000255" key="1">
    <source>
        <dbReference type="HAMAP-Rule" id="MF_02113"/>
    </source>
</evidence>
<accession>A1RX71</accession>
<keyword id="KW-0068">Autocatalytic cleavage</keyword>
<keyword id="KW-0963">Cytoplasm</keyword>
<keyword id="KW-0378">Hydrolase</keyword>
<keyword id="KW-0645">Protease</keyword>
<keyword id="KW-0647">Proteasome</keyword>
<keyword id="KW-1185">Reference proteome</keyword>
<keyword id="KW-0888">Threonine protease</keyword>
<keyword id="KW-0865">Zymogen</keyword>
<dbReference type="EC" id="3.4.25.1" evidence="1"/>
<dbReference type="EMBL" id="CP000505">
    <property type="protein sequence ID" value="ABL77801.1"/>
    <property type="molecule type" value="Genomic_DNA"/>
</dbReference>
<dbReference type="RefSeq" id="WP_011752066.1">
    <property type="nucleotide sequence ID" value="NC_008698.1"/>
</dbReference>
<dbReference type="SMR" id="A1RX71"/>
<dbReference type="STRING" id="368408.Tpen_0392"/>
<dbReference type="EnsemblBacteria" id="ABL77801">
    <property type="protein sequence ID" value="ABL77801"/>
    <property type="gene ID" value="Tpen_0392"/>
</dbReference>
<dbReference type="GeneID" id="4600527"/>
<dbReference type="KEGG" id="tpe:Tpen_0392"/>
<dbReference type="eggNOG" id="arCOG00970">
    <property type="taxonomic scope" value="Archaea"/>
</dbReference>
<dbReference type="HOGENOM" id="CLU_035750_7_2_2"/>
<dbReference type="OrthoDB" id="6330at2157"/>
<dbReference type="Proteomes" id="UP000000641">
    <property type="component" value="Chromosome"/>
</dbReference>
<dbReference type="GO" id="GO:0005737">
    <property type="term" value="C:cytoplasm"/>
    <property type="evidence" value="ECO:0007669"/>
    <property type="project" value="UniProtKB-SubCell"/>
</dbReference>
<dbReference type="GO" id="GO:0019774">
    <property type="term" value="C:proteasome core complex, beta-subunit complex"/>
    <property type="evidence" value="ECO:0007669"/>
    <property type="project" value="UniProtKB-UniRule"/>
</dbReference>
<dbReference type="GO" id="GO:0004298">
    <property type="term" value="F:threonine-type endopeptidase activity"/>
    <property type="evidence" value="ECO:0007669"/>
    <property type="project" value="UniProtKB-UniRule"/>
</dbReference>
<dbReference type="GO" id="GO:0010498">
    <property type="term" value="P:proteasomal protein catabolic process"/>
    <property type="evidence" value="ECO:0007669"/>
    <property type="project" value="UniProtKB-UniRule"/>
</dbReference>
<dbReference type="Gene3D" id="3.60.20.10">
    <property type="entry name" value="Glutamine Phosphoribosylpyrophosphate, subunit 1, domain 1"/>
    <property type="match status" value="1"/>
</dbReference>
<dbReference type="HAMAP" id="MF_02113_A">
    <property type="entry name" value="Proteasome_B_A"/>
    <property type="match status" value="1"/>
</dbReference>
<dbReference type="InterPro" id="IPR029055">
    <property type="entry name" value="Ntn_hydrolases_N"/>
</dbReference>
<dbReference type="InterPro" id="IPR019983">
    <property type="entry name" value="Pept_T1A_Psome_bsu_arc"/>
</dbReference>
<dbReference type="InterPro" id="IPR000243">
    <property type="entry name" value="Pept_T1A_subB"/>
</dbReference>
<dbReference type="InterPro" id="IPR016050">
    <property type="entry name" value="Proteasome_bsu_CS"/>
</dbReference>
<dbReference type="InterPro" id="IPR001353">
    <property type="entry name" value="Proteasome_sua/b"/>
</dbReference>
<dbReference type="InterPro" id="IPR023333">
    <property type="entry name" value="Proteasome_suB-type"/>
</dbReference>
<dbReference type="NCBIfam" id="TIGR03634">
    <property type="entry name" value="arc_protsome_B"/>
    <property type="match status" value="1"/>
</dbReference>
<dbReference type="PANTHER" id="PTHR32194">
    <property type="entry name" value="METALLOPROTEASE TLDD"/>
    <property type="match status" value="1"/>
</dbReference>
<dbReference type="PANTHER" id="PTHR32194:SF2">
    <property type="entry name" value="PROTEASOME SUBUNIT BETA TYPE-1"/>
    <property type="match status" value="1"/>
</dbReference>
<dbReference type="Pfam" id="PF00227">
    <property type="entry name" value="Proteasome"/>
    <property type="match status" value="1"/>
</dbReference>
<dbReference type="PRINTS" id="PR00141">
    <property type="entry name" value="PROTEASOME"/>
</dbReference>
<dbReference type="SUPFAM" id="SSF56235">
    <property type="entry name" value="N-terminal nucleophile aminohydrolases (Ntn hydrolases)"/>
    <property type="match status" value="1"/>
</dbReference>
<dbReference type="PROSITE" id="PS00854">
    <property type="entry name" value="PROTEASOME_BETA_1"/>
    <property type="match status" value="1"/>
</dbReference>
<dbReference type="PROSITE" id="PS51476">
    <property type="entry name" value="PROTEASOME_BETA_2"/>
    <property type="match status" value="1"/>
</dbReference>
<comment type="function">
    <text evidence="1">Component of the proteasome core, a large protease complex with broad specificity involved in protein degradation.</text>
</comment>
<comment type="catalytic activity">
    <reaction evidence="1">
        <text>Cleavage of peptide bonds with very broad specificity.</text>
        <dbReference type="EC" id="3.4.25.1"/>
    </reaction>
</comment>
<comment type="activity regulation">
    <text evidence="1">The formation of the proteasomal ATPase PAN-20S proteasome complex, via the docking of the C-termini of PAN into the intersubunit pockets in the alpha-rings, triggers opening of the gate for substrate entry. Interconversion between the open-gate and close-gate conformations leads to a dynamic regulation of the 20S proteasome proteolysis activity.</text>
</comment>
<comment type="subunit">
    <text evidence="1">The 20S proteasome core is composed of 14 alpha and 14 beta subunits that assemble into four stacked heptameric rings, resulting in a barrel-shaped structure. The two inner rings, each composed of seven catalytic beta subunits, are sandwiched by two outer rings, each composed of seven alpha subunits. The catalytic chamber with the active sites is on the inside of the barrel. Has a gated structure, the ends of the cylinder being occluded by the N-termini of the alpha-subunits. Is capped at one or both ends by the proteasome regulatory ATPase, PAN.</text>
</comment>
<comment type="subcellular location">
    <subcellularLocation>
        <location evidence="1">Cytoplasm</location>
    </subcellularLocation>
</comment>
<comment type="similarity">
    <text evidence="1">Belongs to the peptidase T1B family.</text>
</comment>
<proteinExistence type="inferred from homology"/>
<organism>
    <name type="scientific">Thermofilum pendens (strain DSM 2475 / Hrk 5)</name>
    <dbReference type="NCBI Taxonomy" id="368408"/>
    <lineage>
        <taxon>Archaea</taxon>
        <taxon>Thermoproteota</taxon>
        <taxon>Thermoprotei</taxon>
        <taxon>Thermofilales</taxon>
        <taxon>Thermofilaceae</taxon>
        <taxon>Thermofilum</taxon>
    </lineage>
</organism>
<sequence length="204" mass="22161">MEVLPGTTVGIRVSDGVVLAAEKRVSYGLYLMSKSGKKVYRILDKMGMASAGLMADMQTLARIVEAEMRLYELDSNISPKVWTVAKLLSYILYERRLFPYYAEIVVGGLDEEGSHLYSLDPIGAIIEDDYVALGSGTQLAISIVESNYKKDMSLDEALSLALKSVYAAMKRDAASGDGVDVLVIGKSGTLEKTYPLSELQSVAV</sequence>